<accession>Q4HY90</accession>
<accession>A0A0E0RVY3</accession>
<accession>I1S052</accession>
<accession>V6RRV9</accession>
<keyword id="KW-0010">Activator</keyword>
<keyword id="KW-0156">Chromatin regulator</keyword>
<keyword id="KW-0227">DNA damage</keyword>
<keyword id="KW-0234">DNA repair</keyword>
<keyword id="KW-0539">Nucleus</keyword>
<keyword id="KW-1185">Reference proteome</keyword>
<keyword id="KW-0804">Transcription</keyword>
<keyword id="KW-0805">Transcription regulation</keyword>
<name>SWC4_GIBZE</name>
<proteinExistence type="inferred from homology"/>
<evidence type="ECO:0000250" key="1"/>
<evidence type="ECO:0000256" key="2">
    <source>
        <dbReference type="SAM" id="MobiDB-lite"/>
    </source>
</evidence>
<evidence type="ECO:0000305" key="3"/>
<gene>
    <name type="primary">SWC4</name>
    <name type="ORF">FGRRES_10068</name>
    <name type="ORF">FGSG_10068</name>
</gene>
<dbReference type="EMBL" id="DS231669">
    <property type="protein sequence ID" value="ESU16737.1"/>
    <property type="molecule type" value="Genomic_DNA"/>
</dbReference>
<dbReference type="EMBL" id="HG970332">
    <property type="protein sequence ID" value="CEF75408.1"/>
    <property type="molecule type" value="Genomic_DNA"/>
</dbReference>
<dbReference type="RefSeq" id="XP_011318999.1">
    <property type="nucleotide sequence ID" value="XM_011320697.1"/>
</dbReference>
<dbReference type="SMR" id="Q4HY90"/>
<dbReference type="FunCoup" id="Q4HY90">
    <property type="interactions" value="950"/>
</dbReference>
<dbReference type="STRING" id="229533.Q4HY90"/>
<dbReference type="GeneID" id="23556990"/>
<dbReference type="KEGG" id="fgr:FGSG_10068"/>
<dbReference type="VEuPathDB" id="FungiDB:FGRAMPH1_01G07207"/>
<dbReference type="eggNOG" id="KOG2656">
    <property type="taxonomic scope" value="Eukaryota"/>
</dbReference>
<dbReference type="HOGENOM" id="CLU_018539_3_1_1"/>
<dbReference type="InParanoid" id="Q4HY90"/>
<dbReference type="OrthoDB" id="112003at110618"/>
<dbReference type="PHI-base" id="PHI:1525"/>
<dbReference type="Proteomes" id="UP000070720">
    <property type="component" value="Chromosome 1"/>
</dbReference>
<dbReference type="GO" id="GO:0035267">
    <property type="term" value="C:NuA4 histone acetyltransferase complex"/>
    <property type="evidence" value="ECO:0007669"/>
    <property type="project" value="InterPro"/>
</dbReference>
<dbReference type="GO" id="GO:0000812">
    <property type="term" value="C:Swr1 complex"/>
    <property type="evidence" value="ECO:0007669"/>
    <property type="project" value="TreeGrafter"/>
</dbReference>
<dbReference type="GO" id="GO:0003714">
    <property type="term" value="F:transcription corepressor activity"/>
    <property type="evidence" value="ECO:0007669"/>
    <property type="project" value="TreeGrafter"/>
</dbReference>
<dbReference type="GO" id="GO:0006338">
    <property type="term" value="P:chromatin remodeling"/>
    <property type="evidence" value="ECO:0007669"/>
    <property type="project" value="InterPro"/>
</dbReference>
<dbReference type="GO" id="GO:0006281">
    <property type="term" value="P:DNA repair"/>
    <property type="evidence" value="ECO:0007669"/>
    <property type="project" value="UniProtKB-KW"/>
</dbReference>
<dbReference type="GO" id="GO:0000122">
    <property type="term" value="P:negative regulation of transcription by RNA polymerase II"/>
    <property type="evidence" value="ECO:0007669"/>
    <property type="project" value="TreeGrafter"/>
</dbReference>
<dbReference type="Gene3D" id="1.10.10.60">
    <property type="entry name" value="Homeodomain-like"/>
    <property type="match status" value="1"/>
</dbReference>
<dbReference type="InterPro" id="IPR032563">
    <property type="entry name" value="DAMP1_SANT-like"/>
</dbReference>
<dbReference type="InterPro" id="IPR027109">
    <property type="entry name" value="Swc4/Dmap1"/>
</dbReference>
<dbReference type="PANTHER" id="PTHR12855:SF10">
    <property type="entry name" value="DNA METHYLTRANSFERASE 1-ASSOCIATED PROTEIN 1"/>
    <property type="match status" value="1"/>
</dbReference>
<dbReference type="PANTHER" id="PTHR12855">
    <property type="entry name" value="DNA METHYLTRANSFERASE 1-ASSOCIATED PROTEIN 1 FAMILY MEMBER"/>
    <property type="match status" value="1"/>
</dbReference>
<dbReference type="Pfam" id="PF16282">
    <property type="entry name" value="SANT_DAMP1_like"/>
    <property type="match status" value="1"/>
</dbReference>
<comment type="function">
    <text evidence="1">Component of the SWR1 complex which mediates the ATP-dependent exchange of histone H2A for the H2A variant HZT1 leading to transcriptional regulation of selected genes by chromatin remodeling. Component of the NuA4 histone acetyltransferase complex which is involved in transcriptional activation of selected genes principally by acetylation of nucleosomal histone H4 and H2A. The NuA4 complex is also involved in DNA repair (By similarity).</text>
</comment>
<comment type="subunit">
    <text evidence="1">Component of the SWR1 chromatin-remodeling complex and of the NuA4 histone acetyltransferase complex.</text>
</comment>
<comment type="subcellular location">
    <subcellularLocation>
        <location evidence="1">Nucleus</location>
    </subcellularLocation>
</comment>
<comment type="similarity">
    <text evidence="3">Belongs to the SWC4 family.</text>
</comment>
<sequence>MTSSDVRDVLNLGDGTVGPRSSKKQKLAAPRPNLKGLAREVQNLGGDNPIAIVPEVTHFKKRRFTSRKPTAKWEMRPFKNSARSDSNFTLRHWRRKDEKQEGIDESQEQISQGDQPQPQKNELEDSAFAKYNVQVSVPQYSEGQYQQSLQHVDWTKEETDYLLELAQDFDLRWPLIWDRYEWNPPATNGEADDDGDESKAIVPATRSRTLEDLKARYYEVASKMMAAQKPVQYMTQPEFSLHELMAHFNPQQEKLRKEFALNALTRSREEAREEESLLLEIKRILARSERFNDERRELYNRLDYPRSDTDINAFKSSAGLQNLLQNLVTADKTKKRKSLMPGDVNSPAGTVPPQTAAAASAAATAAAVAQEAGRRESTAASTGPRESTGPAPTPAAANNKKGQQQQQERRKLTTQEELLYGVTHHDRLGSGPTFRTEKINKLFSHKSNQQQMRITNVLNELDVPNKLIMPTAATTHQYEQLLAAVNSLLDARKVSDKLDQEIKTEQAKKAERQKAMAPPEAESTAENGQTGQEKKDGDDGEACAAAVTADTSKEETNGDATSAAGDATKDGLETAVLTSEAPDAPPKETEQNIDERPGSSGAPHKRSASVLSNVSDKSNKRQKK</sequence>
<reference key="1">
    <citation type="journal article" date="2007" name="Science">
        <title>The Fusarium graminearum genome reveals a link between localized polymorphism and pathogen specialization.</title>
        <authorList>
            <person name="Cuomo C.A."/>
            <person name="Gueldener U."/>
            <person name="Xu J.-R."/>
            <person name="Trail F."/>
            <person name="Turgeon B.G."/>
            <person name="Di Pietro A."/>
            <person name="Walton J.D."/>
            <person name="Ma L.-J."/>
            <person name="Baker S.E."/>
            <person name="Rep M."/>
            <person name="Adam G."/>
            <person name="Antoniw J."/>
            <person name="Baldwin T."/>
            <person name="Calvo S.E."/>
            <person name="Chang Y.-L."/>
            <person name="DeCaprio D."/>
            <person name="Gale L.R."/>
            <person name="Gnerre S."/>
            <person name="Goswami R.S."/>
            <person name="Hammond-Kosack K."/>
            <person name="Harris L.J."/>
            <person name="Hilburn K."/>
            <person name="Kennell J.C."/>
            <person name="Kroken S."/>
            <person name="Magnuson J.K."/>
            <person name="Mannhaupt G."/>
            <person name="Mauceli E.W."/>
            <person name="Mewes H.-W."/>
            <person name="Mitterbauer R."/>
            <person name="Muehlbauer G."/>
            <person name="Muensterkoetter M."/>
            <person name="Nelson D."/>
            <person name="O'Donnell K."/>
            <person name="Ouellet T."/>
            <person name="Qi W."/>
            <person name="Quesneville H."/>
            <person name="Roncero M.I.G."/>
            <person name="Seong K.-Y."/>
            <person name="Tetko I.V."/>
            <person name="Urban M."/>
            <person name="Waalwijk C."/>
            <person name="Ward T.J."/>
            <person name="Yao J."/>
            <person name="Birren B.W."/>
            <person name="Kistler H.C."/>
        </authorList>
    </citation>
    <scope>NUCLEOTIDE SEQUENCE [LARGE SCALE GENOMIC DNA]</scope>
    <source>
        <strain>ATCC MYA-4620 / CBS 123657 / FGSC 9075 / NRRL 31084 / PH-1</strain>
    </source>
</reference>
<reference key="2">
    <citation type="journal article" date="2010" name="Nature">
        <title>Comparative genomics reveals mobile pathogenicity chromosomes in Fusarium.</title>
        <authorList>
            <person name="Ma L.-J."/>
            <person name="van der Does H.C."/>
            <person name="Borkovich K.A."/>
            <person name="Coleman J.J."/>
            <person name="Daboussi M.-J."/>
            <person name="Di Pietro A."/>
            <person name="Dufresne M."/>
            <person name="Freitag M."/>
            <person name="Grabherr M."/>
            <person name="Henrissat B."/>
            <person name="Houterman P.M."/>
            <person name="Kang S."/>
            <person name="Shim W.-B."/>
            <person name="Woloshuk C."/>
            <person name="Xie X."/>
            <person name="Xu J.-R."/>
            <person name="Antoniw J."/>
            <person name="Baker S.E."/>
            <person name="Bluhm B.H."/>
            <person name="Breakspear A."/>
            <person name="Brown D.W."/>
            <person name="Butchko R.A.E."/>
            <person name="Chapman S."/>
            <person name="Coulson R."/>
            <person name="Coutinho P.M."/>
            <person name="Danchin E.G.J."/>
            <person name="Diener A."/>
            <person name="Gale L.R."/>
            <person name="Gardiner D.M."/>
            <person name="Goff S."/>
            <person name="Hammond-Kosack K.E."/>
            <person name="Hilburn K."/>
            <person name="Hua-Van A."/>
            <person name="Jonkers W."/>
            <person name="Kazan K."/>
            <person name="Kodira C.D."/>
            <person name="Koehrsen M."/>
            <person name="Kumar L."/>
            <person name="Lee Y.-H."/>
            <person name="Li L."/>
            <person name="Manners J.M."/>
            <person name="Miranda-Saavedra D."/>
            <person name="Mukherjee M."/>
            <person name="Park G."/>
            <person name="Park J."/>
            <person name="Park S.-Y."/>
            <person name="Proctor R.H."/>
            <person name="Regev A."/>
            <person name="Ruiz-Roldan M.C."/>
            <person name="Sain D."/>
            <person name="Sakthikumar S."/>
            <person name="Sykes S."/>
            <person name="Schwartz D.C."/>
            <person name="Turgeon B.G."/>
            <person name="Wapinski I."/>
            <person name="Yoder O."/>
            <person name="Young S."/>
            <person name="Zeng Q."/>
            <person name="Zhou S."/>
            <person name="Galagan J."/>
            <person name="Cuomo C.A."/>
            <person name="Kistler H.C."/>
            <person name="Rep M."/>
        </authorList>
    </citation>
    <scope>GENOME REANNOTATION</scope>
    <source>
        <strain>ATCC MYA-4620 / CBS 123657 / FGSC 9075 / NRRL 31084 / PH-1</strain>
    </source>
</reference>
<reference key="3">
    <citation type="journal article" date="2015" name="BMC Genomics">
        <title>The completed genome sequence of the pathogenic ascomycete fungus Fusarium graminearum.</title>
        <authorList>
            <person name="King R."/>
            <person name="Urban M."/>
            <person name="Hammond-Kosack M.C.U."/>
            <person name="Hassani-Pak K."/>
            <person name="Hammond-Kosack K.E."/>
        </authorList>
    </citation>
    <scope>NUCLEOTIDE SEQUENCE [LARGE SCALE GENOMIC DNA]</scope>
    <source>
        <strain>ATCC MYA-4620 / CBS 123657 / FGSC 9075 / NRRL 31084 / PH-1</strain>
    </source>
</reference>
<organism>
    <name type="scientific">Gibberella zeae (strain ATCC MYA-4620 / CBS 123657 / FGSC 9075 / NRRL 31084 / PH-1)</name>
    <name type="common">Wheat head blight fungus</name>
    <name type="synonym">Fusarium graminearum</name>
    <dbReference type="NCBI Taxonomy" id="229533"/>
    <lineage>
        <taxon>Eukaryota</taxon>
        <taxon>Fungi</taxon>
        <taxon>Dikarya</taxon>
        <taxon>Ascomycota</taxon>
        <taxon>Pezizomycotina</taxon>
        <taxon>Sordariomycetes</taxon>
        <taxon>Hypocreomycetidae</taxon>
        <taxon>Hypocreales</taxon>
        <taxon>Nectriaceae</taxon>
        <taxon>Fusarium</taxon>
    </lineage>
</organism>
<protein>
    <recommendedName>
        <fullName>SWR1-complex protein 4</fullName>
    </recommendedName>
</protein>
<feature type="chain" id="PRO_0000076341" description="SWR1-complex protein 4">
    <location>
        <begin position="1"/>
        <end position="624"/>
    </location>
</feature>
<feature type="domain" description="SANT">
    <location>
        <begin position="146"/>
        <end position="221"/>
    </location>
</feature>
<feature type="region of interest" description="Disordered" evidence="2">
    <location>
        <begin position="1"/>
        <end position="34"/>
    </location>
</feature>
<feature type="region of interest" description="Disordered" evidence="2">
    <location>
        <begin position="96"/>
        <end position="120"/>
    </location>
</feature>
<feature type="region of interest" description="Disordered" evidence="2">
    <location>
        <begin position="334"/>
        <end position="411"/>
    </location>
</feature>
<feature type="region of interest" description="Disordered" evidence="2">
    <location>
        <begin position="504"/>
        <end position="624"/>
    </location>
</feature>
<feature type="compositionally biased region" description="Polar residues" evidence="2">
    <location>
        <begin position="108"/>
        <end position="120"/>
    </location>
</feature>
<feature type="compositionally biased region" description="Low complexity" evidence="2">
    <location>
        <begin position="356"/>
        <end position="371"/>
    </location>
</feature>
<feature type="compositionally biased region" description="Low complexity" evidence="2">
    <location>
        <begin position="388"/>
        <end position="406"/>
    </location>
</feature>
<feature type="compositionally biased region" description="Basic and acidic residues" evidence="2">
    <location>
        <begin position="504"/>
        <end position="514"/>
    </location>
</feature>
<feature type="compositionally biased region" description="Basic and acidic residues" evidence="2">
    <location>
        <begin position="585"/>
        <end position="597"/>
    </location>
</feature>